<dbReference type="EC" id="3.1.3.5" evidence="1"/>
<dbReference type="EMBL" id="AM180088">
    <property type="protein sequence ID" value="CAJ53447.1"/>
    <property type="molecule type" value="Genomic_DNA"/>
</dbReference>
<dbReference type="RefSeq" id="WP_011572545.1">
    <property type="nucleotide sequence ID" value="NC_008212.1"/>
</dbReference>
<dbReference type="SMR" id="Q18F17"/>
<dbReference type="STRING" id="362976.HQ_3350A"/>
<dbReference type="GeneID" id="4194731"/>
<dbReference type="KEGG" id="hwa:HQ_3350A"/>
<dbReference type="eggNOG" id="arCOG02303">
    <property type="taxonomic scope" value="Archaea"/>
</dbReference>
<dbReference type="HOGENOM" id="CLU_045192_1_3_2"/>
<dbReference type="Proteomes" id="UP000001975">
    <property type="component" value="Chromosome"/>
</dbReference>
<dbReference type="GO" id="GO:0005737">
    <property type="term" value="C:cytoplasm"/>
    <property type="evidence" value="ECO:0007669"/>
    <property type="project" value="UniProtKB-SubCell"/>
</dbReference>
<dbReference type="GO" id="GO:0008253">
    <property type="term" value="F:5'-nucleotidase activity"/>
    <property type="evidence" value="ECO:0007669"/>
    <property type="project" value="UniProtKB-UniRule"/>
</dbReference>
<dbReference type="GO" id="GO:0046872">
    <property type="term" value="F:metal ion binding"/>
    <property type="evidence" value="ECO:0007669"/>
    <property type="project" value="UniProtKB-UniRule"/>
</dbReference>
<dbReference type="GO" id="GO:0000166">
    <property type="term" value="F:nucleotide binding"/>
    <property type="evidence" value="ECO:0007669"/>
    <property type="project" value="UniProtKB-KW"/>
</dbReference>
<dbReference type="Gene3D" id="3.40.1210.10">
    <property type="entry name" value="Survival protein SurE-like phosphatase/nucleotidase"/>
    <property type="match status" value="1"/>
</dbReference>
<dbReference type="HAMAP" id="MF_00060">
    <property type="entry name" value="SurE"/>
    <property type="match status" value="1"/>
</dbReference>
<dbReference type="InterPro" id="IPR030048">
    <property type="entry name" value="SurE"/>
</dbReference>
<dbReference type="InterPro" id="IPR002828">
    <property type="entry name" value="SurE-like_Pase/nucleotidase"/>
</dbReference>
<dbReference type="InterPro" id="IPR036523">
    <property type="entry name" value="SurE-like_sf"/>
</dbReference>
<dbReference type="NCBIfam" id="TIGR00087">
    <property type="entry name" value="surE"/>
    <property type="match status" value="1"/>
</dbReference>
<dbReference type="PANTHER" id="PTHR30457">
    <property type="entry name" value="5'-NUCLEOTIDASE SURE"/>
    <property type="match status" value="1"/>
</dbReference>
<dbReference type="PANTHER" id="PTHR30457:SF0">
    <property type="entry name" value="PHOSPHATASE, PUTATIVE (AFU_ORTHOLOGUE AFUA_4G01070)-RELATED"/>
    <property type="match status" value="1"/>
</dbReference>
<dbReference type="Pfam" id="PF01975">
    <property type="entry name" value="SurE"/>
    <property type="match status" value="1"/>
</dbReference>
<dbReference type="SUPFAM" id="SSF64167">
    <property type="entry name" value="SurE-like"/>
    <property type="match status" value="1"/>
</dbReference>
<keyword id="KW-0963">Cytoplasm</keyword>
<keyword id="KW-0378">Hydrolase</keyword>
<keyword id="KW-0479">Metal-binding</keyword>
<keyword id="KW-0547">Nucleotide-binding</keyword>
<keyword id="KW-1185">Reference proteome</keyword>
<evidence type="ECO:0000255" key="1">
    <source>
        <dbReference type="HAMAP-Rule" id="MF_00060"/>
    </source>
</evidence>
<feature type="chain" id="PRO_0000335290" description="5'-nucleotidase SurE">
    <location>
        <begin position="1"/>
        <end position="265"/>
    </location>
</feature>
<feature type="binding site" evidence="1">
    <location>
        <position position="12"/>
    </location>
    <ligand>
        <name>a divalent metal cation</name>
        <dbReference type="ChEBI" id="CHEBI:60240"/>
    </ligand>
</feature>
<feature type="binding site" evidence="1">
    <location>
        <position position="13"/>
    </location>
    <ligand>
        <name>a divalent metal cation</name>
        <dbReference type="ChEBI" id="CHEBI:60240"/>
    </ligand>
</feature>
<feature type="binding site" evidence="1">
    <location>
        <position position="43"/>
    </location>
    <ligand>
        <name>a divalent metal cation</name>
        <dbReference type="ChEBI" id="CHEBI:60240"/>
    </ligand>
</feature>
<feature type="binding site" evidence="1">
    <location>
        <position position="91"/>
    </location>
    <ligand>
        <name>a divalent metal cation</name>
        <dbReference type="ChEBI" id="CHEBI:60240"/>
    </ligand>
</feature>
<reference key="1">
    <citation type="journal article" date="2006" name="BMC Genomics">
        <title>The genome of the square archaeon Haloquadratum walsbyi: life at the limits of water activity.</title>
        <authorList>
            <person name="Bolhuis H."/>
            <person name="Palm P."/>
            <person name="Wende A."/>
            <person name="Falb M."/>
            <person name="Rampp M."/>
            <person name="Rodriguez-Valera F."/>
            <person name="Pfeiffer F."/>
            <person name="Oesterhelt D."/>
        </authorList>
    </citation>
    <scope>NUCLEOTIDE SEQUENCE [LARGE SCALE GENOMIC DNA]</scope>
    <source>
        <strain>DSM 16790 / HBSQ001</strain>
    </source>
</reference>
<protein>
    <recommendedName>
        <fullName evidence="1">5'-nucleotidase SurE</fullName>
        <ecNumber evidence="1">3.1.3.5</ecNumber>
    </recommendedName>
    <alternativeName>
        <fullName evidence="1">Nucleoside 5'-monophosphate phosphohydrolase</fullName>
    </alternativeName>
</protein>
<organism>
    <name type="scientific">Haloquadratum walsbyi (strain DSM 16790 / HBSQ001)</name>
    <dbReference type="NCBI Taxonomy" id="362976"/>
    <lineage>
        <taxon>Archaea</taxon>
        <taxon>Methanobacteriati</taxon>
        <taxon>Methanobacteriota</taxon>
        <taxon>Stenosarchaea group</taxon>
        <taxon>Halobacteria</taxon>
        <taxon>Halobacteriales</taxon>
        <taxon>Haloferacaceae</taxon>
        <taxon>Haloquadratum</taxon>
    </lineage>
</organism>
<gene>
    <name evidence="1" type="primary">surE</name>
    <name type="ordered locus">HQ_3350A</name>
</gene>
<sequence>MSESLSVLLTNDDGIDAVGIQALYQAFDDIAEVTVVAPTDDQSAVGRQLSSDVTIHEHDWGYGIDGTPADCVVAGVEALCPDVDLVIAGCNKGANIGAYVLGRSGTVSAAVESTFFDVPAMAVSMYIPGGGDTPWHKQATEVSAFADASRAATYLARHAFDAGVFEQADYLNINAPVAANEPATLEVTRPSRVYDMTAEHDGNGTVTLHDRVWERMRTDDIPDPSGTDRRAVVDGHISVSPLAAPHTTEHHEALDALASTYLDSI</sequence>
<proteinExistence type="inferred from homology"/>
<comment type="function">
    <text evidence="1">Nucleotidase that shows phosphatase activity on nucleoside 5'-monophosphates.</text>
</comment>
<comment type="catalytic activity">
    <reaction evidence="1">
        <text>a ribonucleoside 5'-phosphate + H2O = a ribonucleoside + phosphate</text>
        <dbReference type="Rhea" id="RHEA:12484"/>
        <dbReference type="ChEBI" id="CHEBI:15377"/>
        <dbReference type="ChEBI" id="CHEBI:18254"/>
        <dbReference type="ChEBI" id="CHEBI:43474"/>
        <dbReference type="ChEBI" id="CHEBI:58043"/>
        <dbReference type="EC" id="3.1.3.5"/>
    </reaction>
</comment>
<comment type="cofactor">
    <cofactor evidence="1">
        <name>a divalent metal cation</name>
        <dbReference type="ChEBI" id="CHEBI:60240"/>
    </cofactor>
    <text evidence="1">Binds 1 divalent metal cation per subunit.</text>
</comment>
<comment type="subcellular location">
    <subcellularLocation>
        <location evidence="1">Cytoplasm</location>
    </subcellularLocation>
</comment>
<comment type="similarity">
    <text evidence="1">Belongs to the SurE nucleotidase family.</text>
</comment>
<accession>Q18F17</accession>
<name>SURE_HALWD</name>